<sequence length="315" mass="35737">MEEAILLNQTSLVTYFRLRGLSVNHKARIAMFSMFLIFYVLTLIGNVLIVITIIYDHRLHTPMYFFLSNLSFIDVCHSTVTVPKMLRDVWSEEKLISFDACVTQMFFLHLFACTEIFLLTVMAYDRYVAICKPLQYMIVMNWKVCVLLAVALWTGGTIHSIALTSLTIKLPYCGPDEIDNFFCDVPQVIKLACIDTHVIEILIVSNSGLISVVCFVVLVVSYAVILVSLRQQISKGKRKALSTCAAHLTVVTLFLGHCIFIYSRPSTSLPEDKVVSVFFTAVTPLLNPIIYTLRNEEMKSALNKLVGRKERKEEK</sequence>
<evidence type="ECO:0000255" key="1"/>
<evidence type="ECO:0000255" key="2">
    <source>
        <dbReference type="PROSITE-ProRule" id="PRU00521"/>
    </source>
</evidence>
<evidence type="ECO:0000269" key="3">
    <source>
    </source>
</evidence>
<evidence type="ECO:0000269" key="4">
    <source>
    </source>
</evidence>
<evidence type="ECO:0000269" key="5">
    <source ref="1"/>
</evidence>
<evidence type="ECO:0000305" key="6"/>
<keyword id="KW-1003">Cell membrane</keyword>
<keyword id="KW-1015">Disulfide bond</keyword>
<keyword id="KW-0297">G-protein coupled receptor</keyword>
<keyword id="KW-0325">Glycoprotein</keyword>
<keyword id="KW-0472">Membrane</keyword>
<keyword id="KW-0552">Olfaction</keyword>
<keyword id="KW-0675">Receptor</keyword>
<keyword id="KW-1185">Reference proteome</keyword>
<keyword id="KW-0716">Sensory transduction</keyword>
<keyword id="KW-0807">Transducer</keyword>
<keyword id="KW-0812">Transmembrane</keyword>
<keyword id="KW-1133">Transmembrane helix</keyword>
<comment type="function">
    <text evidence="6">Odorant receptor.</text>
</comment>
<comment type="subcellular location">
    <subcellularLocation>
        <location>Cell membrane</location>
        <topology>Multi-pass membrane protein</topology>
    </subcellularLocation>
</comment>
<comment type="polymorphism">
    <text evidence="3 4 5">There at least 2 alleles for OR4E1. A non-functional allele results from a polymorphism at position 197 (dbSNP rs199890040), which leads to a frameshift, premature truncation of the coding region and hence pseudogenization. The presence of various combinations of functional (olfactory receptors) and non-functional (olfactory receptor segregating pseudogenes) alleles may underlie differences in olfactory sensitivity between individuals (hyperosmia, hyposmia or even anosmia).</text>
</comment>
<comment type="similarity">
    <text evidence="2">Belongs to the G-protein coupled receptor 1 family.</text>
</comment>
<comment type="online information" name="Human Olfactory Receptor Data Exploratorium (HORDE)">
    <link uri="http://genome.weizmann.ac.il/horde/card/index/symbol:OR4E1P"/>
</comment>
<dbReference type="EMBL" id="AB065562">
    <property type="status" value="NOT_ANNOTATED_CDS"/>
    <property type="molecule type" value="Genomic_DNA"/>
</dbReference>
<dbReference type="EMBL" id="KP290730">
    <property type="protein sequence ID" value="ALI87888.1"/>
    <property type="molecule type" value="Genomic_DNA"/>
</dbReference>
<dbReference type="EMBL" id="AC243972">
    <property type="status" value="NOT_ANNOTATED_CDS"/>
    <property type="molecule type" value="Genomic_DNA"/>
</dbReference>
<dbReference type="EMBL" id="AF399450">
    <property type="status" value="NOT_ANNOTATED_CDS"/>
    <property type="molecule type" value="Genomic_DNA"/>
</dbReference>
<dbReference type="EMBL" id="BK004671">
    <property type="status" value="NOT_ANNOTATED_CDS"/>
    <property type="molecule type" value="Genomic_DNA"/>
</dbReference>
<dbReference type="CCDS" id="CCDS86370.1"/>
<dbReference type="RefSeq" id="NP_001304036.1">
    <property type="nucleotide sequence ID" value="NM_001317107.2"/>
</dbReference>
<dbReference type="SMR" id="P0C645"/>
<dbReference type="FunCoup" id="P0C645">
    <property type="interactions" value="417"/>
</dbReference>
<dbReference type="STRING" id="9606.ENSP00000493111"/>
<dbReference type="GlyCosmos" id="P0C645">
    <property type="glycosylation" value="1 site, No reported glycans"/>
</dbReference>
<dbReference type="GlyGen" id="P0C645">
    <property type="glycosylation" value="1 site"/>
</dbReference>
<dbReference type="BioMuta" id="OR4E1"/>
<dbReference type="DMDM" id="166215771"/>
<dbReference type="PeptideAtlas" id="P0C645"/>
<dbReference type="DNASU" id="26687"/>
<dbReference type="Ensembl" id="ENST00000641792.2">
    <property type="protein sequence ID" value="ENSP00000493111.1"/>
    <property type="gene ID" value="ENSG00000276240.4"/>
</dbReference>
<dbReference type="GeneID" id="26687"/>
<dbReference type="KEGG" id="hsa:26687"/>
<dbReference type="MANE-Select" id="ENST00000641792.2">
    <property type="protein sequence ID" value="ENSP00000493111.1"/>
    <property type="RefSeq nucleotide sequence ID" value="NM_001317107.2"/>
    <property type="RefSeq protein sequence ID" value="NP_001304036.1"/>
</dbReference>
<dbReference type="AGR" id="HGNC:8296"/>
<dbReference type="CTD" id="26687"/>
<dbReference type="GeneCards" id="OR4E1"/>
<dbReference type="HGNC" id="HGNC:8296">
    <property type="gene designation" value="OR4E1"/>
</dbReference>
<dbReference type="HPA" id="ENSG00000276240">
    <property type="expression patterns" value="Not detected"/>
</dbReference>
<dbReference type="neXtProt" id="NX_P0C645"/>
<dbReference type="OpenTargets" id="ENSG00000276240"/>
<dbReference type="VEuPathDB" id="HostDB:ENSG00000276240"/>
<dbReference type="GeneTree" id="ENSGT00940000163058"/>
<dbReference type="InParanoid" id="P0C645"/>
<dbReference type="OMA" id="KMLRDTW"/>
<dbReference type="OrthoDB" id="9615015at2759"/>
<dbReference type="PAN-GO" id="P0C645">
    <property type="GO annotations" value="4 GO annotations based on evolutionary models"/>
</dbReference>
<dbReference type="PhylomeDB" id="P0C645"/>
<dbReference type="PathwayCommons" id="P0C645"/>
<dbReference type="Reactome" id="R-HSA-9752946">
    <property type="pathway name" value="Expression and translocation of olfactory receptors"/>
</dbReference>
<dbReference type="BioGRID-ORCS" id="26687">
    <property type="hits" value="0 hits in 1 CRISPR screen"/>
</dbReference>
<dbReference type="GenomeRNAi" id="26687"/>
<dbReference type="Pharos" id="P0C645">
    <property type="development level" value="Tdark"/>
</dbReference>
<dbReference type="PRO" id="PR:P0C645"/>
<dbReference type="Proteomes" id="UP000005640">
    <property type="component" value="Chromosome 14"/>
</dbReference>
<dbReference type="RNAct" id="P0C645">
    <property type="molecule type" value="protein"/>
</dbReference>
<dbReference type="Bgee" id="ENSG00000276240">
    <property type="expression patterns" value="Expressed in monocyte and 6 other cell types or tissues"/>
</dbReference>
<dbReference type="ExpressionAtlas" id="P0C645">
    <property type="expression patterns" value="baseline and differential"/>
</dbReference>
<dbReference type="GO" id="GO:0016020">
    <property type="term" value="C:membrane"/>
    <property type="evidence" value="ECO:0000318"/>
    <property type="project" value="GO_Central"/>
</dbReference>
<dbReference type="GO" id="GO:0005886">
    <property type="term" value="C:plasma membrane"/>
    <property type="evidence" value="ECO:0007669"/>
    <property type="project" value="UniProtKB-SubCell"/>
</dbReference>
<dbReference type="GO" id="GO:0004930">
    <property type="term" value="F:G protein-coupled receptor activity"/>
    <property type="evidence" value="ECO:0007669"/>
    <property type="project" value="UniProtKB-KW"/>
</dbReference>
<dbReference type="GO" id="GO:0005549">
    <property type="term" value="F:odorant binding"/>
    <property type="evidence" value="ECO:0000318"/>
    <property type="project" value="GO_Central"/>
</dbReference>
<dbReference type="GO" id="GO:0004984">
    <property type="term" value="F:olfactory receptor activity"/>
    <property type="evidence" value="ECO:0000318"/>
    <property type="project" value="GO_Central"/>
</dbReference>
<dbReference type="GO" id="GO:0050911">
    <property type="term" value="P:detection of chemical stimulus involved in sensory perception of smell"/>
    <property type="evidence" value="ECO:0000318"/>
    <property type="project" value="GO_Central"/>
</dbReference>
<dbReference type="CDD" id="cd15940">
    <property type="entry name" value="7tmA_OR4E-like"/>
    <property type="match status" value="1"/>
</dbReference>
<dbReference type="FunFam" id="1.20.1070.10:FF:000007">
    <property type="entry name" value="Olfactory receptor"/>
    <property type="match status" value="1"/>
</dbReference>
<dbReference type="Gene3D" id="1.20.1070.10">
    <property type="entry name" value="Rhodopsin 7-helix transmembrane proteins"/>
    <property type="match status" value="1"/>
</dbReference>
<dbReference type="InterPro" id="IPR000276">
    <property type="entry name" value="GPCR_Rhodpsn"/>
</dbReference>
<dbReference type="InterPro" id="IPR017452">
    <property type="entry name" value="GPCR_Rhodpsn_7TM"/>
</dbReference>
<dbReference type="InterPro" id="IPR000725">
    <property type="entry name" value="Olfact_rcpt"/>
</dbReference>
<dbReference type="InterPro" id="IPR050427">
    <property type="entry name" value="Olfactory_Receptors"/>
</dbReference>
<dbReference type="PANTHER" id="PTHR48002">
    <property type="entry name" value="OLFACTORY RECEPTOR"/>
    <property type="match status" value="1"/>
</dbReference>
<dbReference type="Pfam" id="PF13853">
    <property type="entry name" value="7tm_4"/>
    <property type="match status" value="1"/>
</dbReference>
<dbReference type="PRINTS" id="PR00237">
    <property type="entry name" value="GPCRRHODOPSN"/>
</dbReference>
<dbReference type="PRINTS" id="PR00245">
    <property type="entry name" value="OLFACTORYR"/>
</dbReference>
<dbReference type="SMART" id="SM01381">
    <property type="entry name" value="7TM_GPCR_Srsx"/>
    <property type="match status" value="1"/>
</dbReference>
<dbReference type="SUPFAM" id="SSF81321">
    <property type="entry name" value="Family A G protein-coupled receptor-like"/>
    <property type="match status" value="1"/>
</dbReference>
<dbReference type="PROSITE" id="PS00237">
    <property type="entry name" value="G_PROTEIN_RECEP_F1_1"/>
    <property type="match status" value="1"/>
</dbReference>
<dbReference type="PROSITE" id="PS50262">
    <property type="entry name" value="G_PROTEIN_RECEP_F1_2"/>
    <property type="match status" value="1"/>
</dbReference>
<feature type="chain" id="PRO_0000315824" description="Olfactory receptor 4E1">
    <location>
        <begin position="1"/>
        <end position="315"/>
    </location>
</feature>
<feature type="topological domain" description="Extracellular" evidence="1">
    <location>
        <begin position="1"/>
        <end position="33"/>
    </location>
</feature>
<feature type="transmembrane region" description="Helical; Name=1" evidence="1">
    <location>
        <begin position="34"/>
        <end position="54"/>
    </location>
</feature>
<feature type="topological domain" description="Cytoplasmic" evidence="1">
    <location>
        <begin position="55"/>
        <end position="61"/>
    </location>
</feature>
<feature type="transmembrane region" description="Helical; Name=2" evidence="1">
    <location>
        <begin position="62"/>
        <end position="82"/>
    </location>
</feature>
<feature type="topological domain" description="Extracellular" evidence="1">
    <location>
        <begin position="83"/>
        <end position="101"/>
    </location>
</feature>
<feature type="transmembrane region" description="Helical; Name=3" evidence="1">
    <location>
        <begin position="102"/>
        <end position="122"/>
    </location>
</feature>
<feature type="topological domain" description="Cytoplasmic" evidence="1">
    <location>
        <begin position="123"/>
        <end position="143"/>
    </location>
</feature>
<feature type="transmembrane region" description="Helical; Name=4" evidence="1">
    <location>
        <begin position="144"/>
        <end position="164"/>
    </location>
</feature>
<feature type="topological domain" description="Extracellular" evidence="1">
    <location>
        <begin position="165"/>
        <end position="208"/>
    </location>
</feature>
<feature type="transmembrane region" description="Helical; Name=5" evidence="1">
    <location>
        <begin position="209"/>
        <end position="229"/>
    </location>
</feature>
<feature type="topological domain" description="Cytoplasmic" evidence="1">
    <location>
        <begin position="230"/>
        <end position="240"/>
    </location>
</feature>
<feature type="transmembrane region" description="Helical; Name=6" evidence="1">
    <location>
        <begin position="241"/>
        <end position="261"/>
    </location>
</feature>
<feature type="topological domain" description="Extracellular" evidence="1">
    <location>
        <begin position="262"/>
        <end position="272"/>
    </location>
</feature>
<feature type="transmembrane region" description="Helical; Name=7" evidence="1">
    <location>
        <begin position="273"/>
        <end position="293"/>
    </location>
</feature>
<feature type="topological domain" description="Cytoplasmic" evidence="1">
    <location>
        <begin position="294"/>
        <end position="315"/>
    </location>
</feature>
<feature type="glycosylation site" description="N-linked (GlcNAc...) asparagine" evidence="1">
    <location>
        <position position="8"/>
    </location>
</feature>
<feature type="disulfide bond" evidence="2">
    <location>
        <begin position="101"/>
        <end position="183"/>
    </location>
</feature>
<feature type="sequence variant" id="VAR_080171" description="In dbSNP:rs10143044." evidence="5">
    <original>I</original>
    <variation>L</variation>
    <location>
        <position position="199"/>
    </location>
</feature>
<feature type="sequence variant" id="VAR_080172" description="In dbSNP:rs970025." evidence="5">
    <original>R</original>
    <variation>W</variation>
    <location>
        <position position="238"/>
    </location>
</feature>
<feature type="sequence variant" id="VAR_080173" description="In dbSNP:rs7144135." evidence="5">
    <original>V</original>
    <variation>A</variation>
    <location>
        <position position="274"/>
    </location>
</feature>
<organism>
    <name type="scientific">Homo sapiens</name>
    <name type="common">Human</name>
    <dbReference type="NCBI Taxonomy" id="9606"/>
    <lineage>
        <taxon>Eukaryota</taxon>
        <taxon>Metazoa</taxon>
        <taxon>Chordata</taxon>
        <taxon>Craniata</taxon>
        <taxon>Vertebrata</taxon>
        <taxon>Euteleostomi</taxon>
        <taxon>Mammalia</taxon>
        <taxon>Eutheria</taxon>
        <taxon>Euarchontoglires</taxon>
        <taxon>Primates</taxon>
        <taxon>Haplorrhini</taxon>
        <taxon>Catarrhini</taxon>
        <taxon>Hominidae</taxon>
        <taxon>Homo</taxon>
    </lineage>
</organism>
<protein>
    <recommendedName>
        <fullName>Olfactory receptor 4E1</fullName>
    </recommendedName>
    <alternativeName>
        <fullName>Olfactory receptor OR14-43</fullName>
    </alternativeName>
</protein>
<name>OR4E1_HUMAN</name>
<gene>
    <name type="primary">OR4E1</name>
    <name type="synonym">OR4E1P</name>
</gene>
<reference key="1">
    <citation type="submission" date="2001-07" db="EMBL/GenBank/DDBJ databases">
        <title>Genome-wide discovery and analysis of human seven transmembrane helix receptor genes.</title>
        <authorList>
            <person name="Suwa M."/>
            <person name="Sato T."/>
            <person name="Okouchi I."/>
            <person name="Arita M."/>
            <person name="Futami K."/>
            <person name="Matsumoto S."/>
            <person name="Tsutsumi S."/>
            <person name="Aburatani H."/>
            <person name="Asai K."/>
            <person name="Akiyama Y."/>
        </authorList>
    </citation>
    <scope>NUCLEOTIDE SEQUENCE [GENOMIC DNA] (NON-FUNCTIONAL ALLELE)</scope>
    <scope>POLYMORPHISM</scope>
</reference>
<reference key="2">
    <citation type="submission" date="2014-12" db="EMBL/GenBank/DDBJ databases">
        <title>Human olfactory receptor responses to odorants.</title>
        <authorList>
            <person name="Mainland J.D."/>
            <person name="Li Y.R."/>
            <person name="Zhou T."/>
            <person name="Liu W.L.L."/>
            <person name="Matsunami H."/>
        </authorList>
    </citation>
    <scope>NUCLEOTIDE SEQUENCE [GENOMIC DNA]</scope>
</reference>
<reference key="3">
    <citation type="journal article" date="2003" name="Nature">
        <title>The DNA sequence and analysis of human chromosome 14.</title>
        <authorList>
            <person name="Heilig R."/>
            <person name="Eckenberg R."/>
            <person name="Petit J.-L."/>
            <person name="Fonknechten N."/>
            <person name="Da Silva C."/>
            <person name="Cattolico L."/>
            <person name="Levy M."/>
            <person name="Barbe V."/>
            <person name="De Berardinis V."/>
            <person name="Ureta-Vidal A."/>
            <person name="Pelletier E."/>
            <person name="Vico V."/>
            <person name="Anthouard V."/>
            <person name="Rowen L."/>
            <person name="Madan A."/>
            <person name="Qin S."/>
            <person name="Sun H."/>
            <person name="Du H."/>
            <person name="Pepin K."/>
            <person name="Artiguenave F."/>
            <person name="Robert C."/>
            <person name="Cruaud C."/>
            <person name="Bruels T."/>
            <person name="Jaillon O."/>
            <person name="Friedlander L."/>
            <person name="Samson G."/>
            <person name="Brottier P."/>
            <person name="Cure S."/>
            <person name="Segurens B."/>
            <person name="Aniere F."/>
            <person name="Samain S."/>
            <person name="Crespeau H."/>
            <person name="Abbasi N."/>
            <person name="Aiach N."/>
            <person name="Boscus D."/>
            <person name="Dickhoff R."/>
            <person name="Dors M."/>
            <person name="Dubois I."/>
            <person name="Friedman C."/>
            <person name="Gouyvenoux M."/>
            <person name="James R."/>
            <person name="Madan A."/>
            <person name="Mairey-Estrada B."/>
            <person name="Mangenot S."/>
            <person name="Martins N."/>
            <person name="Menard M."/>
            <person name="Oztas S."/>
            <person name="Ratcliffe A."/>
            <person name="Shaffer T."/>
            <person name="Trask B."/>
            <person name="Vacherie B."/>
            <person name="Bellemere C."/>
            <person name="Belser C."/>
            <person name="Besnard-Gonnet M."/>
            <person name="Bartol-Mavel D."/>
            <person name="Boutard M."/>
            <person name="Briez-Silla S."/>
            <person name="Combette S."/>
            <person name="Dufosse-Laurent V."/>
            <person name="Ferron C."/>
            <person name="Lechaplais C."/>
            <person name="Louesse C."/>
            <person name="Muselet D."/>
            <person name="Magdelenat G."/>
            <person name="Pateau E."/>
            <person name="Petit E."/>
            <person name="Sirvain-Trukniewicz P."/>
            <person name="Trybou A."/>
            <person name="Vega-Czarny N."/>
            <person name="Bataille E."/>
            <person name="Bluet E."/>
            <person name="Bordelais I."/>
            <person name="Dubois M."/>
            <person name="Dumont C."/>
            <person name="Guerin T."/>
            <person name="Haffray S."/>
            <person name="Hammadi R."/>
            <person name="Muanga J."/>
            <person name="Pellouin V."/>
            <person name="Robert D."/>
            <person name="Wunderle E."/>
            <person name="Gauguet G."/>
            <person name="Roy A."/>
            <person name="Sainte-Marthe L."/>
            <person name="Verdier J."/>
            <person name="Verdier-Discala C."/>
            <person name="Hillier L.W."/>
            <person name="Fulton L."/>
            <person name="McPherson J."/>
            <person name="Matsuda F."/>
            <person name="Wilson R."/>
            <person name="Scarpelli C."/>
            <person name="Gyapay G."/>
            <person name="Wincker P."/>
            <person name="Saurin W."/>
            <person name="Quetier F."/>
            <person name="Waterston R."/>
            <person name="Hood L."/>
            <person name="Weissenbach J."/>
        </authorList>
    </citation>
    <scope>NUCLEOTIDE SEQUENCE [LARGE SCALE GENOMIC DNA]</scope>
</reference>
<reference key="4">
    <citation type="journal article" date="2002" name="Genomics">
        <title>DEFOG: a practical scheme for deciphering families of genes.</title>
        <authorList>
            <person name="Fuchs T."/>
            <person name="Malecova B."/>
            <person name="Linhart C."/>
            <person name="Sharan R."/>
            <person name="Khen M."/>
            <person name="Herwig R."/>
            <person name="Shmulevich D."/>
            <person name="Elkon R."/>
            <person name="Steinfath M."/>
            <person name="O'Brien J.K."/>
            <person name="Radelof U."/>
            <person name="Lehrach H."/>
            <person name="Lancet D."/>
            <person name="Shamir R."/>
        </authorList>
    </citation>
    <scope>PARTIAL NUCLEOTIDE SEQUENCE [GENOMIC DNA] (NON-FUNCTIONAL ALLELE)</scope>
    <scope>POLYMORPHISM</scope>
</reference>
<reference key="5">
    <citation type="journal article" date="2004" name="Proc. Natl. Acad. Sci. U.S.A.">
        <title>The human olfactory receptor gene family.</title>
        <authorList>
            <person name="Malnic B."/>
            <person name="Godfrey P.A."/>
            <person name="Buck L.B."/>
        </authorList>
    </citation>
    <scope>IDENTIFICATION</scope>
</reference>
<reference key="6">
    <citation type="journal article" date="2004" name="Proc. Natl. Acad. Sci. U.S.A.">
        <authorList>
            <person name="Malnic B."/>
            <person name="Godfrey P.A."/>
            <person name="Buck L.B."/>
        </authorList>
    </citation>
    <scope>ERRATUM OF PUBMED:14983052</scope>
</reference>
<reference key="7">
    <citation type="journal article" date="2007" name="PLoS Biol.">
        <title>Genetic elucidation of human hyperosmia to isovaleric acid.</title>
        <authorList>
            <person name="Menashe I."/>
            <person name="Abaffy T."/>
            <person name="Hasin Y."/>
            <person name="Goshen S."/>
            <person name="Yahalom V."/>
            <person name="Luetje C.W."/>
            <person name="Lancet D."/>
        </authorList>
    </citation>
    <scope>POLYMORPHISM</scope>
</reference>
<accession>P0C645</accession>
<accession>A0A126GWU0</accession>
<proteinExistence type="inferred from homology"/>